<proteinExistence type="inferred from homology"/>
<name>LPTE_SHIF8</name>
<keyword id="KW-0998">Cell outer membrane</keyword>
<keyword id="KW-0449">Lipoprotein</keyword>
<keyword id="KW-0472">Membrane</keyword>
<keyword id="KW-0564">Palmitate</keyword>
<keyword id="KW-0732">Signal</keyword>
<reference key="1">
    <citation type="journal article" date="2006" name="BMC Genomics">
        <title>Complete genome sequence of Shigella flexneri 5b and comparison with Shigella flexneri 2a.</title>
        <authorList>
            <person name="Nie H."/>
            <person name="Yang F."/>
            <person name="Zhang X."/>
            <person name="Yang J."/>
            <person name="Chen L."/>
            <person name="Wang J."/>
            <person name="Xiong Z."/>
            <person name="Peng J."/>
            <person name="Sun L."/>
            <person name="Dong J."/>
            <person name="Xue Y."/>
            <person name="Xu X."/>
            <person name="Chen S."/>
            <person name="Yao Z."/>
            <person name="Shen Y."/>
            <person name="Jin Q."/>
        </authorList>
    </citation>
    <scope>NUCLEOTIDE SEQUENCE [LARGE SCALE GENOMIC DNA]</scope>
    <source>
        <strain>8401</strain>
    </source>
</reference>
<feature type="signal peptide" evidence="1">
    <location>
        <begin position="1"/>
        <end position="18"/>
    </location>
</feature>
<feature type="chain" id="PRO_0000281188" description="LPS-assembly lipoprotein LptE">
    <location>
        <begin position="19"/>
        <end position="193"/>
    </location>
</feature>
<feature type="region of interest" description="Disordered" evidence="2">
    <location>
        <begin position="166"/>
        <end position="193"/>
    </location>
</feature>
<feature type="compositionally biased region" description="Low complexity" evidence="2">
    <location>
        <begin position="174"/>
        <end position="186"/>
    </location>
</feature>
<feature type="lipid moiety-binding region" description="N-palmitoyl cysteine" evidence="1">
    <location>
        <position position="19"/>
    </location>
</feature>
<feature type="lipid moiety-binding region" description="S-diacylglycerol cysteine" evidence="1">
    <location>
        <position position="19"/>
    </location>
</feature>
<protein>
    <recommendedName>
        <fullName evidence="1">LPS-assembly lipoprotein LptE</fullName>
    </recommendedName>
</protein>
<dbReference type="EMBL" id="CP000266">
    <property type="protein sequence ID" value="ABF02925.1"/>
    <property type="molecule type" value="Genomic_DNA"/>
</dbReference>
<dbReference type="RefSeq" id="WP_001269672.1">
    <property type="nucleotide sequence ID" value="NC_008258.1"/>
</dbReference>
<dbReference type="SMR" id="Q0T6Q1"/>
<dbReference type="KEGG" id="sfv:SFV_0685"/>
<dbReference type="HOGENOM" id="CLU_103309_1_1_6"/>
<dbReference type="Proteomes" id="UP000000659">
    <property type="component" value="Chromosome"/>
</dbReference>
<dbReference type="GO" id="GO:0009279">
    <property type="term" value="C:cell outer membrane"/>
    <property type="evidence" value="ECO:0007669"/>
    <property type="project" value="UniProtKB-SubCell"/>
</dbReference>
<dbReference type="GO" id="GO:1990351">
    <property type="term" value="C:transporter complex"/>
    <property type="evidence" value="ECO:0007669"/>
    <property type="project" value="TreeGrafter"/>
</dbReference>
<dbReference type="GO" id="GO:0001530">
    <property type="term" value="F:lipopolysaccharide binding"/>
    <property type="evidence" value="ECO:0007669"/>
    <property type="project" value="TreeGrafter"/>
</dbReference>
<dbReference type="GO" id="GO:0043165">
    <property type="term" value="P:Gram-negative-bacterium-type cell outer membrane assembly"/>
    <property type="evidence" value="ECO:0007669"/>
    <property type="project" value="UniProtKB-UniRule"/>
</dbReference>
<dbReference type="GO" id="GO:0015920">
    <property type="term" value="P:lipopolysaccharide transport"/>
    <property type="evidence" value="ECO:0007669"/>
    <property type="project" value="TreeGrafter"/>
</dbReference>
<dbReference type="FunFam" id="3.30.160.150:FF:000001">
    <property type="entry name" value="LPS-assembly lipoprotein LptE"/>
    <property type="match status" value="1"/>
</dbReference>
<dbReference type="Gene3D" id="3.30.160.150">
    <property type="entry name" value="Lipoprotein like domain"/>
    <property type="match status" value="1"/>
</dbReference>
<dbReference type="HAMAP" id="MF_01186">
    <property type="entry name" value="LPS_assembly_LptE"/>
    <property type="match status" value="1"/>
</dbReference>
<dbReference type="InterPro" id="IPR007485">
    <property type="entry name" value="LPS_assembly_LptE"/>
</dbReference>
<dbReference type="NCBIfam" id="NF008062">
    <property type="entry name" value="PRK10796.1"/>
    <property type="match status" value="1"/>
</dbReference>
<dbReference type="PANTHER" id="PTHR38098">
    <property type="entry name" value="LPS-ASSEMBLY LIPOPROTEIN LPTE"/>
    <property type="match status" value="1"/>
</dbReference>
<dbReference type="PANTHER" id="PTHR38098:SF1">
    <property type="entry name" value="LPS-ASSEMBLY LIPOPROTEIN LPTE"/>
    <property type="match status" value="1"/>
</dbReference>
<dbReference type="Pfam" id="PF04390">
    <property type="entry name" value="LptE"/>
    <property type="match status" value="1"/>
</dbReference>
<dbReference type="PROSITE" id="PS51257">
    <property type="entry name" value="PROKAR_LIPOPROTEIN"/>
    <property type="match status" value="1"/>
</dbReference>
<evidence type="ECO:0000255" key="1">
    <source>
        <dbReference type="HAMAP-Rule" id="MF_01186"/>
    </source>
</evidence>
<evidence type="ECO:0000256" key="2">
    <source>
        <dbReference type="SAM" id="MobiDB-lite"/>
    </source>
</evidence>
<sequence length="193" mass="21387">MRYLATLLLSLAVLITAGCGWHLRDTTQVPSTMKVMILDSGDPNGPLSRAVRNQLRLNGVELLDKETTRKDVPSLRLGKVSIAKDTASVFRNGQTAEYQMIMTVNATVLIPGRDIYPISAKVFRSFFDNPQMALAKDNEQDMIVKEMYDRAAEQLIRKLPSIRAADIRSDEEQTSTTTDTPATPARVSTMLGN</sequence>
<accession>Q0T6Q1</accession>
<organism>
    <name type="scientific">Shigella flexneri serotype 5b (strain 8401)</name>
    <dbReference type="NCBI Taxonomy" id="373384"/>
    <lineage>
        <taxon>Bacteria</taxon>
        <taxon>Pseudomonadati</taxon>
        <taxon>Pseudomonadota</taxon>
        <taxon>Gammaproteobacteria</taxon>
        <taxon>Enterobacterales</taxon>
        <taxon>Enterobacteriaceae</taxon>
        <taxon>Shigella</taxon>
    </lineage>
</organism>
<gene>
    <name evidence="1" type="primary">lptE</name>
    <name type="synonym">rlpB</name>
    <name type="ordered locus">SFV_0685</name>
</gene>
<comment type="function">
    <text evidence="1">Together with LptD, is involved in the assembly of lipopolysaccharide (LPS) at the surface of the outer membrane. Required for the proper assembly of LptD. Binds LPS and may serve as the LPS recognition site at the outer membrane.</text>
</comment>
<comment type="subunit">
    <text evidence="1">Component of the lipopolysaccharide transport and assembly complex. Interacts with LptD.</text>
</comment>
<comment type="subcellular location">
    <subcellularLocation>
        <location evidence="1">Cell outer membrane</location>
        <topology evidence="1">Lipid-anchor</topology>
    </subcellularLocation>
</comment>
<comment type="similarity">
    <text evidence="1">Belongs to the LptE lipoprotein family.</text>
</comment>